<comment type="function">
    <text evidence="1">One of the primary rRNA binding proteins, it binds directly to 16S rRNA where it nucleates assembly of the body of the 30S subunit.</text>
</comment>
<comment type="function">
    <text evidence="1">With S5 and S12 plays an important role in translational accuracy.</text>
</comment>
<comment type="subunit">
    <text evidence="1">Part of the 30S ribosomal subunit. Contacts protein S5. The interaction surface between S4 and S5 is involved in control of translational fidelity.</text>
</comment>
<comment type="similarity">
    <text evidence="1">Belongs to the universal ribosomal protein uS4 family.</text>
</comment>
<keyword id="KW-0687">Ribonucleoprotein</keyword>
<keyword id="KW-0689">Ribosomal protein</keyword>
<keyword id="KW-0694">RNA-binding</keyword>
<keyword id="KW-0699">rRNA-binding</keyword>
<name>RS4_PYRIL</name>
<protein>
    <recommendedName>
        <fullName evidence="1">Small ribosomal subunit protein uS4</fullName>
    </recommendedName>
    <alternativeName>
        <fullName evidence="2">30S ribosomal protein S4</fullName>
    </alternativeName>
</protein>
<dbReference type="EMBL" id="CP000504">
    <property type="protein sequence ID" value="ABL88085.1"/>
    <property type="molecule type" value="Genomic_DNA"/>
</dbReference>
<dbReference type="RefSeq" id="WP_011762660.1">
    <property type="nucleotide sequence ID" value="NC_008701.1"/>
</dbReference>
<dbReference type="SMR" id="A1RT03"/>
<dbReference type="STRING" id="384616.Pisl_0909"/>
<dbReference type="GeneID" id="4617581"/>
<dbReference type="KEGG" id="pis:Pisl_0909"/>
<dbReference type="eggNOG" id="arCOG04239">
    <property type="taxonomic scope" value="Archaea"/>
</dbReference>
<dbReference type="HOGENOM" id="CLU_089738_1_1_2"/>
<dbReference type="OrthoDB" id="10429at2157"/>
<dbReference type="Proteomes" id="UP000002595">
    <property type="component" value="Chromosome"/>
</dbReference>
<dbReference type="GO" id="GO:0015935">
    <property type="term" value="C:small ribosomal subunit"/>
    <property type="evidence" value="ECO:0007669"/>
    <property type="project" value="InterPro"/>
</dbReference>
<dbReference type="GO" id="GO:0019843">
    <property type="term" value="F:rRNA binding"/>
    <property type="evidence" value="ECO:0007669"/>
    <property type="project" value="UniProtKB-UniRule"/>
</dbReference>
<dbReference type="GO" id="GO:0003735">
    <property type="term" value="F:structural constituent of ribosome"/>
    <property type="evidence" value="ECO:0007669"/>
    <property type="project" value="InterPro"/>
</dbReference>
<dbReference type="GO" id="GO:0042274">
    <property type="term" value="P:ribosomal small subunit biogenesis"/>
    <property type="evidence" value="ECO:0007669"/>
    <property type="project" value="TreeGrafter"/>
</dbReference>
<dbReference type="GO" id="GO:0006412">
    <property type="term" value="P:translation"/>
    <property type="evidence" value="ECO:0007669"/>
    <property type="project" value="UniProtKB-UniRule"/>
</dbReference>
<dbReference type="CDD" id="cd00165">
    <property type="entry name" value="S4"/>
    <property type="match status" value="1"/>
</dbReference>
<dbReference type="Gene3D" id="3.10.290.10">
    <property type="entry name" value="RNA-binding S4 domain"/>
    <property type="match status" value="1"/>
</dbReference>
<dbReference type="HAMAP" id="MF_01306_A">
    <property type="entry name" value="Ribosomal_uS4_A"/>
    <property type="match status" value="1"/>
</dbReference>
<dbReference type="InterPro" id="IPR022801">
    <property type="entry name" value="Ribosomal_uS4"/>
</dbReference>
<dbReference type="InterPro" id="IPR022802">
    <property type="entry name" value="Ribosomal_uS4_arc"/>
</dbReference>
<dbReference type="InterPro" id="IPR018079">
    <property type="entry name" value="Ribosomal_uS4_CS"/>
</dbReference>
<dbReference type="InterPro" id="IPR005710">
    <property type="entry name" value="Ribosomal_uS4_euk/arc"/>
</dbReference>
<dbReference type="InterPro" id="IPR001912">
    <property type="entry name" value="Ribosomal_uS4_N"/>
</dbReference>
<dbReference type="InterPro" id="IPR002942">
    <property type="entry name" value="S4_RNA-bd"/>
</dbReference>
<dbReference type="InterPro" id="IPR036986">
    <property type="entry name" value="S4_RNA-bd_sf"/>
</dbReference>
<dbReference type="NCBIfam" id="NF003139">
    <property type="entry name" value="PRK04051.1"/>
    <property type="match status" value="1"/>
</dbReference>
<dbReference type="NCBIfam" id="TIGR01018">
    <property type="entry name" value="uS4_arch"/>
    <property type="match status" value="1"/>
</dbReference>
<dbReference type="PANTHER" id="PTHR11831">
    <property type="entry name" value="30S 40S RIBOSOMAL PROTEIN"/>
    <property type="match status" value="1"/>
</dbReference>
<dbReference type="PANTHER" id="PTHR11831:SF5">
    <property type="entry name" value="40S RIBOSOMAL PROTEIN S9"/>
    <property type="match status" value="1"/>
</dbReference>
<dbReference type="Pfam" id="PF01479">
    <property type="entry name" value="S4"/>
    <property type="match status" value="1"/>
</dbReference>
<dbReference type="SMART" id="SM01390">
    <property type="entry name" value="Ribosomal_S4"/>
    <property type="match status" value="1"/>
</dbReference>
<dbReference type="SMART" id="SM00363">
    <property type="entry name" value="S4"/>
    <property type="match status" value="1"/>
</dbReference>
<dbReference type="SUPFAM" id="SSF55174">
    <property type="entry name" value="Alpha-L RNA-binding motif"/>
    <property type="match status" value="1"/>
</dbReference>
<dbReference type="PROSITE" id="PS00632">
    <property type="entry name" value="RIBOSOMAL_S4"/>
    <property type="match status" value="1"/>
</dbReference>
<dbReference type="PROSITE" id="PS50889">
    <property type="entry name" value="S4"/>
    <property type="match status" value="1"/>
</dbReference>
<gene>
    <name evidence="1" type="primary">rps4</name>
    <name type="ordered locus">Pisl_0909</name>
</gene>
<reference key="1">
    <citation type="submission" date="2006-12" db="EMBL/GenBank/DDBJ databases">
        <title>Complete sequence of Pyrobaculum islandicum DSM 4184.</title>
        <authorList>
            <person name="Copeland A."/>
            <person name="Lucas S."/>
            <person name="Lapidus A."/>
            <person name="Barry K."/>
            <person name="Detter J.C."/>
            <person name="Glavina del Rio T."/>
            <person name="Dalin E."/>
            <person name="Tice H."/>
            <person name="Pitluck S."/>
            <person name="Meincke L."/>
            <person name="Brettin T."/>
            <person name="Bruce D."/>
            <person name="Han C."/>
            <person name="Tapia R."/>
            <person name="Gilna P."/>
            <person name="Schmutz J."/>
            <person name="Larimer F."/>
            <person name="Land M."/>
            <person name="Hauser L."/>
            <person name="Kyrpides N."/>
            <person name="Mikhailova N."/>
            <person name="Cozen A.E."/>
            <person name="Fitz-Gibbon S.T."/>
            <person name="House C.H."/>
            <person name="Saltikov C."/>
            <person name="Lowe T."/>
            <person name="Richardson P."/>
        </authorList>
    </citation>
    <scope>NUCLEOTIDE SEQUENCE [LARGE SCALE GENOMIC DNA]</scope>
    <source>
        <strain>DSM 4184 / JCM 9189 / GEO3</strain>
    </source>
</reference>
<evidence type="ECO:0000255" key="1">
    <source>
        <dbReference type="HAMAP-Rule" id="MF_01306"/>
    </source>
</evidence>
<evidence type="ECO:0000305" key="2"/>
<proteinExistence type="inferred from homology"/>
<sequence>MGGLKKPKKKYLEGKPKKIWNKQLLLEELQLVGEYGLRNKKELWLARAHLKWIVRRARSLLSMTPEERAPLELPFKEKLYKMGFIEDPNVPLDRILSLDVRAILERRLQTIVYRKGLAKSIYHARQLVVHGHVAVAGRRVTSPGFLVPRDLEDKITLIE</sequence>
<organism>
    <name type="scientific">Pyrobaculum islandicum (strain DSM 4184 / JCM 9189 / GEO3)</name>
    <dbReference type="NCBI Taxonomy" id="384616"/>
    <lineage>
        <taxon>Archaea</taxon>
        <taxon>Thermoproteota</taxon>
        <taxon>Thermoprotei</taxon>
        <taxon>Thermoproteales</taxon>
        <taxon>Thermoproteaceae</taxon>
        <taxon>Pyrobaculum</taxon>
    </lineage>
</organism>
<accession>A1RT03</accession>
<feature type="chain" id="PRO_0000293412" description="Small ribosomal subunit protein uS4">
    <location>
        <begin position="1"/>
        <end position="159"/>
    </location>
</feature>
<feature type="domain" description="S4 RNA-binding" evidence="1">
    <location>
        <begin position="106"/>
        <end position="158"/>
    </location>
</feature>